<gene>
    <name evidence="1" type="primary">frr</name>
    <name type="ordered locus">SERP0826</name>
</gene>
<reference key="1">
    <citation type="journal article" date="2005" name="J. Bacteriol.">
        <title>Insights on evolution of virulence and resistance from the complete genome analysis of an early methicillin-resistant Staphylococcus aureus strain and a biofilm-producing methicillin-resistant Staphylococcus epidermidis strain.</title>
        <authorList>
            <person name="Gill S.R."/>
            <person name="Fouts D.E."/>
            <person name="Archer G.L."/>
            <person name="Mongodin E.F."/>
            <person name="DeBoy R.T."/>
            <person name="Ravel J."/>
            <person name="Paulsen I.T."/>
            <person name="Kolonay J.F."/>
            <person name="Brinkac L.M."/>
            <person name="Beanan M.J."/>
            <person name="Dodson R.J."/>
            <person name="Daugherty S.C."/>
            <person name="Madupu R."/>
            <person name="Angiuoli S.V."/>
            <person name="Durkin A.S."/>
            <person name="Haft D.H."/>
            <person name="Vamathevan J.J."/>
            <person name="Khouri H."/>
            <person name="Utterback T.R."/>
            <person name="Lee C."/>
            <person name="Dimitrov G."/>
            <person name="Jiang L."/>
            <person name="Qin H."/>
            <person name="Weidman J."/>
            <person name="Tran K."/>
            <person name="Kang K.H."/>
            <person name="Hance I.R."/>
            <person name="Nelson K.E."/>
            <person name="Fraser C.M."/>
        </authorList>
    </citation>
    <scope>NUCLEOTIDE SEQUENCE [LARGE SCALE GENOMIC DNA]</scope>
    <source>
        <strain>ATCC 35984 / DSM 28319 / BCRC 17069 / CCUG 31568 / BM 3577 / RP62A</strain>
    </source>
</reference>
<organism>
    <name type="scientific">Staphylococcus epidermidis (strain ATCC 35984 / DSM 28319 / BCRC 17069 / CCUG 31568 / BM 3577 / RP62A)</name>
    <dbReference type="NCBI Taxonomy" id="176279"/>
    <lineage>
        <taxon>Bacteria</taxon>
        <taxon>Bacillati</taxon>
        <taxon>Bacillota</taxon>
        <taxon>Bacilli</taxon>
        <taxon>Bacillales</taxon>
        <taxon>Staphylococcaceae</taxon>
        <taxon>Staphylococcus</taxon>
    </lineage>
</organism>
<accession>Q5HPT2</accession>
<protein>
    <recommendedName>
        <fullName evidence="1">Ribosome-recycling factor</fullName>
        <shortName evidence="1">RRF</shortName>
    </recommendedName>
    <alternativeName>
        <fullName evidence="1">Ribosome-releasing factor</fullName>
    </alternativeName>
</protein>
<name>RRF_STAEQ</name>
<keyword id="KW-0963">Cytoplasm</keyword>
<keyword id="KW-0648">Protein biosynthesis</keyword>
<keyword id="KW-1185">Reference proteome</keyword>
<evidence type="ECO:0000255" key="1">
    <source>
        <dbReference type="HAMAP-Rule" id="MF_00040"/>
    </source>
</evidence>
<evidence type="ECO:0000256" key="2">
    <source>
        <dbReference type="SAM" id="MobiDB-lite"/>
    </source>
</evidence>
<dbReference type="EMBL" id="CP000029">
    <property type="protein sequence ID" value="AAW54179.1"/>
    <property type="molecule type" value="Genomic_DNA"/>
</dbReference>
<dbReference type="RefSeq" id="WP_001829472.1">
    <property type="nucleotide sequence ID" value="NC_002976.3"/>
</dbReference>
<dbReference type="SMR" id="Q5HPT2"/>
<dbReference type="STRING" id="176279.SERP0826"/>
<dbReference type="GeneID" id="50018929"/>
<dbReference type="KEGG" id="ser:SERP0826"/>
<dbReference type="eggNOG" id="COG0233">
    <property type="taxonomic scope" value="Bacteria"/>
</dbReference>
<dbReference type="HOGENOM" id="CLU_073981_2_0_9"/>
<dbReference type="Proteomes" id="UP000000531">
    <property type="component" value="Chromosome"/>
</dbReference>
<dbReference type="GO" id="GO:0005737">
    <property type="term" value="C:cytoplasm"/>
    <property type="evidence" value="ECO:0007669"/>
    <property type="project" value="UniProtKB-SubCell"/>
</dbReference>
<dbReference type="GO" id="GO:0043023">
    <property type="term" value="F:ribosomal large subunit binding"/>
    <property type="evidence" value="ECO:0007669"/>
    <property type="project" value="TreeGrafter"/>
</dbReference>
<dbReference type="GO" id="GO:0006415">
    <property type="term" value="P:translational termination"/>
    <property type="evidence" value="ECO:0007669"/>
    <property type="project" value="UniProtKB-UniRule"/>
</dbReference>
<dbReference type="CDD" id="cd00520">
    <property type="entry name" value="RRF"/>
    <property type="match status" value="1"/>
</dbReference>
<dbReference type="FunFam" id="1.10.132.20:FF:000001">
    <property type="entry name" value="Ribosome-recycling factor"/>
    <property type="match status" value="1"/>
</dbReference>
<dbReference type="FunFam" id="3.30.1360.40:FF:000001">
    <property type="entry name" value="Ribosome-recycling factor"/>
    <property type="match status" value="1"/>
</dbReference>
<dbReference type="Gene3D" id="3.30.1360.40">
    <property type="match status" value="1"/>
</dbReference>
<dbReference type="Gene3D" id="1.10.132.20">
    <property type="entry name" value="Ribosome-recycling factor"/>
    <property type="match status" value="1"/>
</dbReference>
<dbReference type="HAMAP" id="MF_00040">
    <property type="entry name" value="RRF"/>
    <property type="match status" value="1"/>
</dbReference>
<dbReference type="InterPro" id="IPR002661">
    <property type="entry name" value="Ribosome_recyc_fac"/>
</dbReference>
<dbReference type="InterPro" id="IPR023584">
    <property type="entry name" value="Ribosome_recyc_fac_dom"/>
</dbReference>
<dbReference type="InterPro" id="IPR036191">
    <property type="entry name" value="RRF_sf"/>
</dbReference>
<dbReference type="NCBIfam" id="TIGR00496">
    <property type="entry name" value="frr"/>
    <property type="match status" value="1"/>
</dbReference>
<dbReference type="PANTHER" id="PTHR20982:SF3">
    <property type="entry name" value="MITOCHONDRIAL RIBOSOME RECYCLING FACTOR PSEUDO 1"/>
    <property type="match status" value="1"/>
</dbReference>
<dbReference type="PANTHER" id="PTHR20982">
    <property type="entry name" value="RIBOSOME RECYCLING FACTOR"/>
    <property type="match status" value="1"/>
</dbReference>
<dbReference type="Pfam" id="PF01765">
    <property type="entry name" value="RRF"/>
    <property type="match status" value="1"/>
</dbReference>
<dbReference type="SUPFAM" id="SSF55194">
    <property type="entry name" value="Ribosome recycling factor, RRF"/>
    <property type="match status" value="1"/>
</dbReference>
<proteinExistence type="inferred from homology"/>
<feature type="chain" id="PRO_0000167546" description="Ribosome-recycling factor">
    <location>
        <begin position="1"/>
        <end position="184"/>
    </location>
</feature>
<feature type="region of interest" description="Disordered" evidence="2">
    <location>
        <begin position="141"/>
        <end position="165"/>
    </location>
</feature>
<comment type="function">
    <text evidence="1">Responsible for the release of ribosomes from messenger RNA at the termination of protein biosynthesis. May increase the efficiency of translation by recycling ribosomes from one round of translation to another.</text>
</comment>
<comment type="subcellular location">
    <subcellularLocation>
        <location evidence="1">Cytoplasm</location>
    </subcellularLocation>
</comment>
<comment type="similarity">
    <text evidence="1">Belongs to the RRF family.</text>
</comment>
<sequence>MSDIIKDTKSRMQKSIDNLSRELANISAGRANSNLLNGVTVDYYGAPTPVQQLASINVPEARLLVISPYDKSSVADIEKAIIAANLGVNPTSDGEVIRISVPALTEERRKELVKEVKKIGEDAKVSIRNIRRDINDQLKKDEKNGDITEDDLRSQTDDVQKATDNSIKEIDQLVADKEKDIMSV</sequence>